<gene>
    <name evidence="1" type="primary">moaA</name>
    <name type="ordered locus">XCC0995</name>
</gene>
<sequence>MLPDLSAAPMQDRYGRPLRDLRLSVIEACNFRCGYCMPADRVPDDYGLDADQRLSFDQLETLVRAFVAVGVTKLRLTGGEPLLRKNLPVLIQRLAAIEGIEDLALTTNGALLARQAVALRQAGLRRITVSMDALEPALFRQMSGGRGEIDQVLAGIAAAEQAGFKRLKINCVVQRDVNEDQVLPLVEHFRGTGHVLRFIEFMDVGSCNGWRPEAVVTSAQLRDRIHARWPLAPLDANYTGEVAQRHAFADGLGEVGFVSSVSVPFCGDCQRARVSADGHLYTCLFASQGHDLKPALAEGEQGLATHLRQRWSVRADRYSEVRASTSRRRKPVEMFLIGG</sequence>
<dbReference type="EC" id="4.1.99.22" evidence="1"/>
<dbReference type="EMBL" id="AE008922">
    <property type="protein sequence ID" value="AAM40296.1"/>
    <property type="molecule type" value="Genomic_DNA"/>
</dbReference>
<dbReference type="RefSeq" id="NP_636372.1">
    <property type="nucleotide sequence ID" value="NC_003902.1"/>
</dbReference>
<dbReference type="SMR" id="Q8PBX1"/>
<dbReference type="STRING" id="190485.XCC0995"/>
<dbReference type="EnsemblBacteria" id="AAM40296">
    <property type="protein sequence ID" value="AAM40296"/>
    <property type="gene ID" value="XCC0995"/>
</dbReference>
<dbReference type="KEGG" id="xcc:XCC0995"/>
<dbReference type="PATRIC" id="fig|190485.4.peg.1060"/>
<dbReference type="eggNOG" id="COG2896">
    <property type="taxonomic scope" value="Bacteria"/>
</dbReference>
<dbReference type="HOGENOM" id="CLU_009273_0_1_6"/>
<dbReference type="OrthoDB" id="9763993at2"/>
<dbReference type="UniPathway" id="UPA00344"/>
<dbReference type="Proteomes" id="UP000001010">
    <property type="component" value="Chromosome"/>
</dbReference>
<dbReference type="GO" id="GO:0051539">
    <property type="term" value="F:4 iron, 4 sulfur cluster binding"/>
    <property type="evidence" value="ECO:0007669"/>
    <property type="project" value="UniProtKB-UniRule"/>
</dbReference>
<dbReference type="GO" id="GO:0061799">
    <property type="term" value="F:cyclic pyranopterin monophosphate synthase activity"/>
    <property type="evidence" value="ECO:0000318"/>
    <property type="project" value="GO_Central"/>
</dbReference>
<dbReference type="GO" id="GO:0061798">
    <property type="term" value="F:GTP 3',8'-cyclase activity"/>
    <property type="evidence" value="ECO:0000318"/>
    <property type="project" value="GO_Central"/>
</dbReference>
<dbReference type="GO" id="GO:0005525">
    <property type="term" value="F:GTP binding"/>
    <property type="evidence" value="ECO:0007669"/>
    <property type="project" value="UniProtKB-UniRule"/>
</dbReference>
<dbReference type="GO" id="GO:0046872">
    <property type="term" value="F:metal ion binding"/>
    <property type="evidence" value="ECO:0007669"/>
    <property type="project" value="UniProtKB-KW"/>
</dbReference>
<dbReference type="GO" id="GO:1904047">
    <property type="term" value="F:S-adenosyl-L-methionine binding"/>
    <property type="evidence" value="ECO:0007669"/>
    <property type="project" value="UniProtKB-UniRule"/>
</dbReference>
<dbReference type="GO" id="GO:0006777">
    <property type="term" value="P:Mo-molybdopterin cofactor biosynthetic process"/>
    <property type="evidence" value="ECO:0000318"/>
    <property type="project" value="GO_Central"/>
</dbReference>
<dbReference type="CDD" id="cd01335">
    <property type="entry name" value="Radical_SAM"/>
    <property type="match status" value="1"/>
</dbReference>
<dbReference type="CDD" id="cd21117">
    <property type="entry name" value="Twitch_MoaA"/>
    <property type="match status" value="1"/>
</dbReference>
<dbReference type="Gene3D" id="3.20.20.70">
    <property type="entry name" value="Aldolase class I"/>
    <property type="match status" value="1"/>
</dbReference>
<dbReference type="HAMAP" id="MF_01225_B">
    <property type="entry name" value="MoaA_B"/>
    <property type="match status" value="1"/>
</dbReference>
<dbReference type="InterPro" id="IPR013785">
    <property type="entry name" value="Aldolase_TIM"/>
</dbReference>
<dbReference type="InterPro" id="IPR006638">
    <property type="entry name" value="Elp3/MiaA/NifB-like_rSAM"/>
</dbReference>
<dbReference type="InterPro" id="IPR013483">
    <property type="entry name" value="MoaA"/>
</dbReference>
<dbReference type="InterPro" id="IPR000385">
    <property type="entry name" value="MoaA_NifB_PqqE_Fe-S-bd_CS"/>
</dbReference>
<dbReference type="InterPro" id="IPR010505">
    <property type="entry name" value="MoaA_twitch"/>
</dbReference>
<dbReference type="InterPro" id="IPR050105">
    <property type="entry name" value="MoCo_biosynth_MoaA/MoaC"/>
</dbReference>
<dbReference type="InterPro" id="IPR007197">
    <property type="entry name" value="rSAM"/>
</dbReference>
<dbReference type="NCBIfam" id="TIGR02666">
    <property type="entry name" value="moaA"/>
    <property type="match status" value="1"/>
</dbReference>
<dbReference type="PANTHER" id="PTHR22960:SF0">
    <property type="entry name" value="MOLYBDENUM COFACTOR BIOSYNTHESIS PROTEIN 1"/>
    <property type="match status" value="1"/>
</dbReference>
<dbReference type="PANTHER" id="PTHR22960">
    <property type="entry name" value="MOLYBDOPTERIN COFACTOR SYNTHESIS PROTEIN A"/>
    <property type="match status" value="1"/>
</dbReference>
<dbReference type="Pfam" id="PF13353">
    <property type="entry name" value="Fer4_12"/>
    <property type="match status" value="1"/>
</dbReference>
<dbReference type="Pfam" id="PF06463">
    <property type="entry name" value="Mob_synth_C"/>
    <property type="match status" value="1"/>
</dbReference>
<dbReference type="Pfam" id="PF04055">
    <property type="entry name" value="Radical_SAM"/>
    <property type="match status" value="1"/>
</dbReference>
<dbReference type="SFLD" id="SFLDG01383">
    <property type="entry name" value="cyclic_pyranopterin_phosphate"/>
    <property type="match status" value="1"/>
</dbReference>
<dbReference type="SFLD" id="SFLDG01067">
    <property type="entry name" value="SPASM/twitch_domain_containing"/>
    <property type="match status" value="1"/>
</dbReference>
<dbReference type="SMART" id="SM00729">
    <property type="entry name" value="Elp3"/>
    <property type="match status" value="1"/>
</dbReference>
<dbReference type="SUPFAM" id="SSF102114">
    <property type="entry name" value="Radical SAM enzymes"/>
    <property type="match status" value="1"/>
</dbReference>
<dbReference type="PROSITE" id="PS01305">
    <property type="entry name" value="MOAA_NIFB_PQQE"/>
    <property type="match status" value="1"/>
</dbReference>
<dbReference type="PROSITE" id="PS51918">
    <property type="entry name" value="RADICAL_SAM"/>
    <property type="match status" value="1"/>
</dbReference>
<reference key="1">
    <citation type="journal article" date="2002" name="Nature">
        <title>Comparison of the genomes of two Xanthomonas pathogens with differing host specificities.</title>
        <authorList>
            <person name="da Silva A.C.R."/>
            <person name="Ferro J.A."/>
            <person name="Reinach F.C."/>
            <person name="Farah C.S."/>
            <person name="Furlan L.R."/>
            <person name="Quaggio R.B."/>
            <person name="Monteiro-Vitorello C.B."/>
            <person name="Van Sluys M.A."/>
            <person name="Almeida N.F. Jr."/>
            <person name="Alves L.M.C."/>
            <person name="do Amaral A.M."/>
            <person name="Bertolini M.C."/>
            <person name="Camargo L.E.A."/>
            <person name="Camarotte G."/>
            <person name="Cannavan F."/>
            <person name="Cardozo J."/>
            <person name="Chambergo F."/>
            <person name="Ciapina L.P."/>
            <person name="Cicarelli R.M.B."/>
            <person name="Coutinho L.L."/>
            <person name="Cursino-Santos J.R."/>
            <person name="El-Dorry H."/>
            <person name="Faria J.B."/>
            <person name="Ferreira A.J.S."/>
            <person name="Ferreira R.C.C."/>
            <person name="Ferro M.I.T."/>
            <person name="Formighieri E.F."/>
            <person name="Franco M.C."/>
            <person name="Greggio C.C."/>
            <person name="Gruber A."/>
            <person name="Katsuyama A.M."/>
            <person name="Kishi L.T."/>
            <person name="Leite R.P."/>
            <person name="Lemos E.G.M."/>
            <person name="Lemos M.V.F."/>
            <person name="Locali E.C."/>
            <person name="Machado M.A."/>
            <person name="Madeira A.M.B.N."/>
            <person name="Martinez-Rossi N.M."/>
            <person name="Martins E.C."/>
            <person name="Meidanis J."/>
            <person name="Menck C.F.M."/>
            <person name="Miyaki C.Y."/>
            <person name="Moon D.H."/>
            <person name="Moreira L.M."/>
            <person name="Novo M.T.M."/>
            <person name="Okura V.K."/>
            <person name="Oliveira M.C."/>
            <person name="Oliveira V.R."/>
            <person name="Pereira H.A."/>
            <person name="Rossi A."/>
            <person name="Sena J.A.D."/>
            <person name="Silva C."/>
            <person name="de Souza R.F."/>
            <person name="Spinola L.A.F."/>
            <person name="Takita M.A."/>
            <person name="Tamura R.E."/>
            <person name="Teixeira E.C."/>
            <person name="Tezza R.I.D."/>
            <person name="Trindade dos Santos M."/>
            <person name="Truffi D."/>
            <person name="Tsai S.M."/>
            <person name="White F.F."/>
            <person name="Setubal J.C."/>
            <person name="Kitajima J.P."/>
        </authorList>
    </citation>
    <scope>NUCLEOTIDE SEQUENCE [LARGE SCALE GENOMIC DNA]</scope>
    <source>
        <strain>ATCC 33913 / DSM 3586 / NCPPB 528 / LMG 568 / P 25</strain>
    </source>
</reference>
<keyword id="KW-0004">4Fe-4S</keyword>
<keyword id="KW-0342">GTP-binding</keyword>
<keyword id="KW-0408">Iron</keyword>
<keyword id="KW-0411">Iron-sulfur</keyword>
<keyword id="KW-0456">Lyase</keyword>
<keyword id="KW-0479">Metal-binding</keyword>
<keyword id="KW-0501">Molybdenum cofactor biosynthesis</keyword>
<keyword id="KW-0547">Nucleotide-binding</keyword>
<keyword id="KW-1185">Reference proteome</keyword>
<keyword id="KW-0949">S-adenosyl-L-methionine</keyword>
<proteinExistence type="inferred from homology"/>
<comment type="function">
    <text evidence="1">Catalyzes the cyclization of GTP to (8S)-3',8-cyclo-7,8-dihydroguanosine 5'-triphosphate.</text>
</comment>
<comment type="catalytic activity">
    <reaction evidence="1">
        <text>GTP + AH2 + S-adenosyl-L-methionine = (8S)-3',8-cyclo-7,8-dihydroguanosine 5'-triphosphate + 5'-deoxyadenosine + L-methionine + A + H(+)</text>
        <dbReference type="Rhea" id="RHEA:49576"/>
        <dbReference type="ChEBI" id="CHEBI:13193"/>
        <dbReference type="ChEBI" id="CHEBI:15378"/>
        <dbReference type="ChEBI" id="CHEBI:17319"/>
        <dbReference type="ChEBI" id="CHEBI:17499"/>
        <dbReference type="ChEBI" id="CHEBI:37565"/>
        <dbReference type="ChEBI" id="CHEBI:57844"/>
        <dbReference type="ChEBI" id="CHEBI:59789"/>
        <dbReference type="ChEBI" id="CHEBI:131766"/>
        <dbReference type="EC" id="4.1.99.22"/>
    </reaction>
</comment>
<comment type="cofactor">
    <cofactor evidence="1">
        <name>[4Fe-4S] cluster</name>
        <dbReference type="ChEBI" id="CHEBI:49883"/>
    </cofactor>
    <text evidence="1">Binds 2 [4Fe-4S] clusters. Binds 1 [4Fe-4S] cluster coordinated with 3 cysteines and an exchangeable S-adenosyl-L-methionine and 1 [4Fe-4S] cluster coordinated with 3 cysteines and the GTP-derived substrate.</text>
</comment>
<comment type="pathway">
    <text evidence="1">Cofactor biosynthesis; molybdopterin biosynthesis.</text>
</comment>
<comment type="subunit">
    <text evidence="1">Monomer and homodimer.</text>
</comment>
<comment type="similarity">
    <text evidence="1">Belongs to the radical SAM superfamily. MoaA family.</text>
</comment>
<organism>
    <name type="scientific">Xanthomonas campestris pv. campestris (strain ATCC 33913 / DSM 3586 / NCPPB 528 / LMG 568 / P 25)</name>
    <dbReference type="NCBI Taxonomy" id="190485"/>
    <lineage>
        <taxon>Bacteria</taxon>
        <taxon>Pseudomonadati</taxon>
        <taxon>Pseudomonadota</taxon>
        <taxon>Gammaproteobacteria</taxon>
        <taxon>Lysobacterales</taxon>
        <taxon>Lysobacteraceae</taxon>
        <taxon>Xanthomonas</taxon>
    </lineage>
</organism>
<protein>
    <recommendedName>
        <fullName evidence="1">GTP 3',8-cyclase</fullName>
        <ecNumber evidence="1">4.1.99.22</ecNumber>
    </recommendedName>
    <alternativeName>
        <fullName evidence="1">Molybdenum cofactor biosynthesis protein A</fullName>
    </alternativeName>
</protein>
<evidence type="ECO:0000255" key="1">
    <source>
        <dbReference type="HAMAP-Rule" id="MF_01225"/>
    </source>
</evidence>
<evidence type="ECO:0000255" key="2">
    <source>
        <dbReference type="PROSITE-ProRule" id="PRU01266"/>
    </source>
</evidence>
<feature type="chain" id="PRO_0000153011" description="GTP 3',8-cyclase">
    <location>
        <begin position="1"/>
        <end position="339"/>
    </location>
</feature>
<feature type="domain" description="Radical SAM core" evidence="2">
    <location>
        <begin position="13"/>
        <end position="249"/>
    </location>
</feature>
<feature type="binding site" evidence="1">
    <location>
        <position position="22"/>
    </location>
    <ligand>
        <name>GTP</name>
        <dbReference type="ChEBI" id="CHEBI:37565"/>
    </ligand>
</feature>
<feature type="binding site" evidence="1">
    <location>
        <position position="29"/>
    </location>
    <ligand>
        <name>[4Fe-4S] cluster</name>
        <dbReference type="ChEBI" id="CHEBI:49883"/>
        <label>1</label>
        <note>4Fe-4S-S-AdoMet</note>
    </ligand>
</feature>
<feature type="binding site" evidence="1">
    <location>
        <position position="33"/>
    </location>
    <ligand>
        <name>[4Fe-4S] cluster</name>
        <dbReference type="ChEBI" id="CHEBI:49883"/>
        <label>1</label>
        <note>4Fe-4S-S-AdoMet</note>
    </ligand>
</feature>
<feature type="binding site" evidence="1">
    <location>
        <position position="35"/>
    </location>
    <ligand>
        <name>S-adenosyl-L-methionine</name>
        <dbReference type="ChEBI" id="CHEBI:59789"/>
    </ligand>
</feature>
<feature type="binding site" evidence="1">
    <location>
        <position position="36"/>
    </location>
    <ligand>
        <name>[4Fe-4S] cluster</name>
        <dbReference type="ChEBI" id="CHEBI:49883"/>
        <label>1</label>
        <note>4Fe-4S-S-AdoMet</note>
    </ligand>
</feature>
<feature type="binding site" evidence="1">
    <location>
        <position position="75"/>
    </location>
    <ligand>
        <name>GTP</name>
        <dbReference type="ChEBI" id="CHEBI:37565"/>
    </ligand>
</feature>
<feature type="binding site" evidence="1">
    <location>
        <position position="79"/>
    </location>
    <ligand>
        <name>S-adenosyl-L-methionine</name>
        <dbReference type="ChEBI" id="CHEBI:59789"/>
    </ligand>
</feature>
<feature type="binding site" evidence="1">
    <location>
        <position position="106"/>
    </location>
    <ligand>
        <name>GTP</name>
        <dbReference type="ChEBI" id="CHEBI:37565"/>
    </ligand>
</feature>
<feature type="binding site" evidence="1">
    <location>
        <position position="130"/>
    </location>
    <ligand>
        <name>S-adenosyl-L-methionine</name>
        <dbReference type="ChEBI" id="CHEBI:59789"/>
    </ligand>
</feature>
<feature type="binding site" evidence="1">
    <location>
        <position position="168"/>
    </location>
    <ligand>
        <name>GTP</name>
        <dbReference type="ChEBI" id="CHEBI:37565"/>
    </ligand>
</feature>
<feature type="binding site" evidence="1">
    <location>
        <position position="202"/>
    </location>
    <ligand>
        <name>S-adenosyl-L-methionine</name>
        <dbReference type="ChEBI" id="CHEBI:59789"/>
    </ligand>
</feature>
<feature type="binding site" evidence="1">
    <location>
        <position position="266"/>
    </location>
    <ligand>
        <name>[4Fe-4S] cluster</name>
        <dbReference type="ChEBI" id="CHEBI:49883"/>
        <label>2</label>
        <note>4Fe-4S-substrate</note>
    </ligand>
</feature>
<feature type="binding site" evidence="1">
    <location>
        <position position="269"/>
    </location>
    <ligand>
        <name>[4Fe-4S] cluster</name>
        <dbReference type="ChEBI" id="CHEBI:49883"/>
        <label>2</label>
        <note>4Fe-4S-substrate</note>
    </ligand>
</feature>
<feature type="binding site" evidence="1">
    <location>
        <begin position="271"/>
        <end position="273"/>
    </location>
    <ligand>
        <name>GTP</name>
        <dbReference type="ChEBI" id="CHEBI:37565"/>
    </ligand>
</feature>
<feature type="binding site" evidence="1">
    <location>
        <position position="283"/>
    </location>
    <ligand>
        <name>[4Fe-4S] cluster</name>
        <dbReference type="ChEBI" id="CHEBI:49883"/>
        <label>2</label>
        <note>4Fe-4S-substrate</note>
    </ligand>
</feature>
<accession>Q8PBX1</accession>
<name>MOAA_XANCP</name>